<comment type="function">
    <text evidence="1">Transcription factor involved in erythroid differentiation. Involved in transcriptional activation of the globin gene (By similarity).</text>
</comment>
<comment type="subcellular location">
    <subcellularLocation>
        <location evidence="3">Nucleus</location>
    </subcellularLocation>
</comment>
<sequence>MGDAKEAGAEGPPAGAAAREGLSLLSQAESEESSAQGSALFLGGNEVKSRAVVKYSSAPPRTAFARLEEKTDLKLPPANWLRESAKLGPAGTTILGNSKKSKPFSSFGMAYDFIDSVGNDVDVVSDSENIKKLLKIPYSKSHVSMAVHRIGRTLLLDELDIQELFMRSSQTGDWTWLKEFYQRLIDQKWQRKKKSKEHWYQKAILSKFLYYSINGDGAAQPVSSTTEQQESSSSDQTNDSEGASWPAPFEMPSSVSEDPSASSQGLKNDFVRNILWTFEDIHMLVGSNMPIFGGGRYPAVSLRLRDNNKPINVLTGIDYWLDNLICNVPELVMCFHVNGIVQKYEMIKTEEIPNLENSNFSTKVIKDIAQNILSFLKSNCTKEGHTYWLFKASGSDIVKLYDLTTLCEETEDKYQNPFTMPVAILLYKVACNMMMKKNQNKKHYGTIRTLLLNCLKLLDKSRHPQIIASANYMLSELFQLDEPKKEENSESPLNENSDESYSEEEEEMPDSDENGSYSTSSDPSDDSNAVAIIKSVGELSVPEKYKSIHQIRPSCAFPVCHDTEERCRLVLSYVLEGLKSVDSSIKKESDLPAADPSTPIPLKYEDESSRGGPEGLEKQMALFLDKMGSLQKGNYSSQSGMIPGSWQHKMKLQLILKSSKAYYVLSDAAMSLQKYGRALRYIKLALQSHDTYCCLCTNMLSEVLLFLSQYLTLCGDIQLMLAQNANNRAAHLEEFHYRTKEDQEILHSLHRESSCQGFAWATDLSTDLESQLSVSCKCYEATNEILQFSDLKSQNPEHYVQVLKRMGNIRNEIGVFYMNQAAALQSERVVSKSVSAAEQQLWKKSFSCFEKGIHNFESIEDATNAALLLCNTGRLMRICAQAHCGAGDEFKREFSPEEGLYYNKAIDYYLKALRSLGTRDIHPAVWDSVNWELSTTYFTMATLQQDYAPLSRKAQEQIEKEVSEAMMKSLKYCDVDSVSARQPLCQYRAATIHHRLASMYHSCLRNQLGDEHLRKQHRVLADLHYSKAAKLFQLLKDAPCELLRVQLERVAFAEFQMTSQNSNVGKLKTLSGALNIMVRTEHAFQLIQKELIEELGQPKSGDAAVAADASPSLNREEVMKLLSIFESRLSFLLLQSIKLLSSTKKKTSNNIEDDAVLKTNKHIYSQLLRATANKTATLLERINVIIHLLGQLAAGSAASSNAVQ</sequence>
<reference key="1">
    <citation type="submission" date="2004-11" db="EMBL/GenBank/DDBJ databases">
        <authorList>
            <consortium name="The German cDNA consortium"/>
        </authorList>
    </citation>
    <scope>NUCLEOTIDE SEQUENCE [LARGE SCALE MRNA]</scope>
    <source>
        <tissue>Brain cortex</tissue>
    </source>
</reference>
<protein>
    <recommendedName>
        <fullName>Erythroid differentiation-related factor 1</fullName>
    </recommendedName>
</protein>
<gene>
    <name type="primary">EDRF1</name>
</gene>
<dbReference type="EMBL" id="CR859321">
    <property type="protein sequence ID" value="CAH91499.1"/>
    <property type="molecule type" value="mRNA"/>
</dbReference>
<dbReference type="FunCoup" id="Q5R9R1">
    <property type="interactions" value="827"/>
</dbReference>
<dbReference type="STRING" id="9601.ENSPPYP00000003210"/>
<dbReference type="eggNOG" id="ENOG502QTNC">
    <property type="taxonomic scope" value="Eukaryota"/>
</dbReference>
<dbReference type="InParanoid" id="Q5R9R1"/>
<dbReference type="Proteomes" id="UP000001595">
    <property type="component" value="Unplaced"/>
</dbReference>
<dbReference type="GO" id="GO:0005634">
    <property type="term" value="C:nucleus"/>
    <property type="evidence" value="ECO:0007669"/>
    <property type="project" value="UniProtKB-SubCell"/>
</dbReference>
<dbReference type="GO" id="GO:0045893">
    <property type="term" value="P:positive regulation of DNA-templated transcription"/>
    <property type="evidence" value="ECO:0007669"/>
    <property type="project" value="TreeGrafter"/>
</dbReference>
<dbReference type="InterPro" id="IPR056582">
    <property type="entry name" value="EDRF1_N"/>
</dbReference>
<dbReference type="InterPro" id="IPR056583">
    <property type="entry name" value="EDRF1_TPR"/>
</dbReference>
<dbReference type="PANTHER" id="PTHR15000">
    <property type="entry name" value="ERYTHROID DIFFERENTIATION-RELATED FACTOR 1"/>
    <property type="match status" value="1"/>
</dbReference>
<dbReference type="PANTHER" id="PTHR15000:SF1">
    <property type="entry name" value="ERYTHROID DIFFERENTIATION-RELATED FACTOR 1"/>
    <property type="match status" value="1"/>
</dbReference>
<dbReference type="Pfam" id="PF23788">
    <property type="entry name" value="EDRF1_N"/>
    <property type="match status" value="1"/>
</dbReference>
<dbReference type="Pfam" id="PF23723">
    <property type="entry name" value="TPR_EDRF1"/>
    <property type="match status" value="1"/>
</dbReference>
<accession>Q5R9R1</accession>
<proteinExistence type="evidence at transcript level"/>
<keyword id="KW-0010">Activator</keyword>
<keyword id="KW-0539">Nucleus</keyword>
<keyword id="KW-1185">Reference proteome</keyword>
<keyword id="KW-0677">Repeat</keyword>
<keyword id="KW-0802">TPR repeat</keyword>
<keyword id="KW-0804">Transcription</keyword>
<keyword id="KW-0805">Transcription regulation</keyword>
<name>EDRF1_PONAB</name>
<feature type="chain" id="PRO_0000244262" description="Erythroid differentiation-related factor 1">
    <location>
        <begin position="1"/>
        <end position="1204"/>
    </location>
</feature>
<feature type="repeat" description="TPR 1">
    <location>
        <begin position="693"/>
        <end position="726"/>
    </location>
</feature>
<feature type="repeat" description="TPR 2">
    <location>
        <begin position="920"/>
        <end position="953"/>
    </location>
</feature>
<feature type="region of interest" description="Disordered" evidence="2">
    <location>
        <begin position="1"/>
        <end position="30"/>
    </location>
</feature>
<feature type="region of interest" description="Disordered" evidence="2">
    <location>
        <begin position="220"/>
        <end position="264"/>
    </location>
</feature>
<feature type="region of interest" description="Disordered" evidence="2">
    <location>
        <begin position="483"/>
        <end position="527"/>
    </location>
</feature>
<feature type="region of interest" description="Disordered" evidence="2">
    <location>
        <begin position="586"/>
        <end position="613"/>
    </location>
</feature>
<feature type="compositionally biased region" description="Low complexity" evidence="2">
    <location>
        <begin position="9"/>
        <end position="30"/>
    </location>
</feature>
<feature type="compositionally biased region" description="Low complexity" evidence="2">
    <location>
        <begin position="223"/>
        <end position="241"/>
    </location>
</feature>
<feature type="compositionally biased region" description="Low complexity" evidence="2">
    <location>
        <begin position="253"/>
        <end position="263"/>
    </location>
</feature>
<feature type="compositionally biased region" description="Acidic residues" evidence="2">
    <location>
        <begin position="496"/>
        <end position="513"/>
    </location>
</feature>
<organism>
    <name type="scientific">Pongo abelii</name>
    <name type="common">Sumatran orangutan</name>
    <name type="synonym">Pongo pygmaeus abelii</name>
    <dbReference type="NCBI Taxonomy" id="9601"/>
    <lineage>
        <taxon>Eukaryota</taxon>
        <taxon>Metazoa</taxon>
        <taxon>Chordata</taxon>
        <taxon>Craniata</taxon>
        <taxon>Vertebrata</taxon>
        <taxon>Euteleostomi</taxon>
        <taxon>Mammalia</taxon>
        <taxon>Eutheria</taxon>
        <taxon>Euarchontoglires</taxon>
        <taxon>Primates</taxon>
        <taxon>Haplorrhini</taxon>
        <taxon>Catarrhini</taxon>
        <taxon>Hominidae</taxon>
        <taxon>Pongo</taxon>
    </lineage>
</organism>
<evidence type="ECO:0000250" key="1"/>
<evidence type="ECO:0000256" key="2">
    <source>
        <dbReference type="SAM" id="MobiDB-lite"/>
    </source>
</evidence>
<evidence type="ECO:0000305" key="3"/>